<sequence>MSGKASTEGSVTTEFLSDIIGKTVNVKLASGLLYSGRLESIDGFMNVALSSATEHYESNNNKLLNKFNSDVFLRGTQVMYISEQKI</sequence>
<protein>
    <recommendedName>
        <fullName>U6 snRNA-associated Sm-like protein LSm6</fullName>
    </recommendedName>
</protein>
<gene>
    <name type="primary">LSM6</name>
    <name type="ORF">SCY_1265</name>
</gene>
<keyword id="KW-0963">Cytoplasm</keyword>
<keyword id="KW-0507">mRNA processing</keyword>
<keyword id="KW-0508">mRNA splicing</keyword>
<keyword id="KW-0539">Nucleus</keyword>
<keyword id="KW-0687">Ribonucleoprotein</keyword>
<keyword id="KW-0694">RNA-binding</keyword>
<keyword id="KW-0698">rRNA processing</keyword>
<keyword id="KW-0747">Spliceosome</keyword>
<keyword id="KW-0819">tRNA processing</keyword>
<accession>A6ZYX7</accession>
<evidence type="ECO:0000250" key="1"/>
<evidence type="ECO:0000255" key="2">
    <source>
        <dbReference type="PROSITE-ProRule" id="PRU01346"/>
    </source>
</evidence>
<evidence type="ECO:0000305" key="3"/>
<comment type="function">
    <text evidence="1">Component of LSm protein complexes, which are involved in RNA processing and may function in a chaperone-like manner, facilitating the efficient association of RNA processing factors with their substrates. Component of the cytoplasmic LSM1-LSM7 complex, which is thought to be involved in mRNA degradation by activating the decapping step in the 5'-to-3' mRNA decay pathway. In association with PAT1, LSM1-LSM7 binds directly to RNAs near the 3'-end and prefers oligoadenylated RNAs over polyadenylated RNAs. Component of the nuclear LSM2-LSM8 complex, which is involved in splicing of nuclear mRNAs. LSM2-LSM8 associates with multiple snRNP complexes containing the U6 snRNA (U4/U6 di-snRNP, spliceosomal U4/U6.U5 tri-snRNP, and free U6 snRNP). It binds directly to the 3'-terminal U-tract of U6 snRNA and plays a role in the biogenesis and stability of the U6 snRNP and U4/U6 snRNP complexes. LSM2-LSM8 probably also is involved degradation of nuclear pre-mRNA by targeting them for decapping, and in processing of pre-tRNAs, pre-rRNAs and U3 snoRNA. Component of a nucleolar LSM2-LSM7 complex, which associates with the precursor of the RNA component of RNase P (pre-P RNA) and with the small nucleolar RNA (snoRNA) snR5. It may play a role in the maturation of a subset of nucleolus-associated small RNAs (By similarity).</text>
</comment>
<comment type="subunit">
    <text evidence="1">Component of the heptameric LSM1-LSM7 complex, which consists of LSM1, LSM2, LSM3, LSM4, LSM5, LSM6 and LSM7. LSM1-LSM7 associates with PAT1 and XRN1. Component of the heptameric LSM2-LSM8 complex, which consists of LSM2, LSM3, LSM4, LSM5, LSM6, LSM7 and LSM8. The LSm subunits form a seven-membered ring structure with a doughnut shape (By similarity). Component of a LSM2-LSM7 complex, which consists of at least LSM2, LSM3, LSM4, LSM5, LSM6 and LSM7. It is not known whether another protein replaces the missing LSm to form a novel heptameric complex. Component of the spliceosome U4/U6-U5 tri-snRNP complex composed of the U4, U6 and U5 snRNAs and at least PRP3, PRP4, PRP6, PRP8, PRP18, PRP31, PRP38, SNU13, SNU23, SNU66, SNU114, SPP381, SMB1, SMD1, SMD2, SMD3, SMX2, SMX3, LSM2, LSM3, LSM4, LSM5, LSM6, LSM7, LSM8, BRR2 and DIB1 (By similarity).</text>
</comment>
<comment type="subcellular location">
    <subcellularLocation>
        <location evidence="1">Cytoplasm</location>
    </subcellularLocation>
    <subcellularLocation>
        <location evidence="1">Nucleus</location>
        <location evidence="1">Nucleolus</location>
    </subcellularLocation>
    <text evidence="1">LSM1 and LSM8 act competitively with respect to the localization of LSM1-LSM7 to the cytoplasm and LSM2-LSM8 to the nucleus. LSm proteins shift to the cytoplasm under conditions of stress (By similarity).</text>
</comment>
<comment type="similarity">
    <text evidence="3">Belongs to the snRNP Sm proteins family. SmF/LSm6 subfamily.</text>
</comment>
<name>LSM6_YEAS7</name>
<organism>
    <name type="scientific">Saccharomyces cerevisiae (strain YJM789)</name>
    <name type="common">Baker's yeast</name>
    <dbReference type="NCBI Taxonomy" id="307796"/>
    <lineage>
        <taxon>Eukaryota</taxon>
        <taxon>Fungi</taxon>
        <taxon>Dikarya</taxon>
        <taxon>Ascomycota</taxon>
        <taxon>Saccharomycotina</taxon>
        <taxon>Saccharomycetes</taxon>
        <taxon>Saccharomycetales</taxon>
        <taxon>Saccharomycetaceae</taxon>
        <taxon>Saccharomyces</taxon>
    </lineage>
</organism>
<reference key="1">
    <citation type="journal article" date="2007" name="Proc. Natl. Acad. Sci. U.S.A.">
        <title>Genome sequencing and comparative analysis of Saccharomyces cerevisiae strain YJM789.</title>
        <authorList>
            <person name="Wei W."/>
            <person name="McCusker J.H."/>
            <person name="Hyman R.W."/>
            <person name="Jones T."/>
            <person name="Ning Y."/>
            <person name="Cao Z."/>
            <person name="Gu Z."/>
            <person name="Bruno D."/>
            <person name="Miranda M."/>
            <person name="Nguyen M."/>
            <person name="Wilhelmy J."/>
            <person name="Komp C."/>
            <person name="Tamse R."/>
            <person name="Wang X."/>
            <person name="Jia P."/>
            <person name="Luedi P."/>
            <person name="Oefner P.J."/>
            <person name="David L."/>
            <person name="Dietrich F.S."/>
            <person name="Li Y."/>
            <person name="Davis R.W."/>
            <person name="Steinmetz L.M."/>
        </authorList>
    </citation>
    <scope>NUCLEOTIDE SEQUENCE [LARGE SCALE GENOMIC DNA]</scope>
    <source>
        <strain>YJM789</strain>
    </source>
</reference>
<feature type="chain" id="PRO_0000333607" description="U6 snRNA-associated Sm-like protein LSm6">
    <location>
        <begin position="1"/>
        <end position="86"/>
    </location>
</feature>
<feature type="domain" description="Sm" evidence="2">
    <location>
        <begin position="11"/>
        <end position="86"/>
    </location>
</feature>
<proteinExistence type="inferred from homology"/>
<dbReference type="EMBL" id="AAFW02000145">
    <property type="protein sequence ID" value="EDN60707.1"/>
    <property type="molecule type" value="Genomic_DNA"/>
</dbReference>
<dbReference type="EMDB" id="EMD-3683"/>
<dbReference type="EMDB" id="EMD-8012"/>
<dbReference type="SMR" id="A6ZYX7"/>
<dbReference type="HOGENOM" id="CLU_076902_7_1_1"/>
<dbReference type="Proteomes" id="UP000007060">
    <property type="component" value="Unassembled WGS sequence"/>
</dbReference>
<dbReference type="GO" id="GO:0005730">
    <property type="term" value="C:nucleolus"/>
    <property type="evidence" value="ECO:0007669"/>
    <property type="project" value="UniProtKB-SubCell"/>
</dbReference>
<dbReference type="GO" id="GO:0000932">
    <property type="term" value="C:P-body"/>
    <property type="evidence" value="ECO:0007669"/>
    <property type="project" value="TreeGrafter"/>
</dbReference>
<dbReference type="GO" id="GO:0005732">
    <property type="term" value="C:sno(s)RNA-containing ribonucleoprotein complex"/>
    <property type="evidence" value="ECO:0007669"/>
    <property type="project" value="TreeGrafter"/>
</dbReference>
<dbReference type="GO" id="GO:0005681">
    <property type="term" value="C:spliceosomal complex"/>
    <property type="evidence" value="ECO:0007669"/>
    <property type="project" value="UniProtKB-KW"/>
</dbReference>
<dbReference type="GO" id="GO:0046540">
    <property type="term" value="C:U4/U6 x U5 tri-snRNP complex"/>
    <property type="evidence" value="ECO:0007669"/>
    <property type="project" value="TreeGrafter"/>
</dbReference>
<dbReference type="GO" id="GO:0005688">
    <property type="term" value="C:U6 snRNP"/>
    <property type="evidence" value="ECO:0007669"/>
    <property type="project" value="TreeGrafter"/>
</dbReference>
<dbReference type="GO" id="GO:0003723">
    <property type="term" value="F:RNA binding"/>
    <property type="evidence" value="ECO:0007669"/>
    <property type="project" value="UniProtKB-KW"/>
</dbReference>
<dbReference type="GO" id="GO:0030490">
    <property type="term" value="P:maturation of SSU-rRNA"/>
    <property type="evidence" value="ECO:0007669"/>
    <property type="project" value="TreeGrafter"/>
</dbReference>
<dbReference type="GO" id="GO:0000398">
    <property type="term" value="P:mRNA splicing, via spliceosome"/>
    <property type="evidence" value="ECO:0007669"/>
    <property type="project" value="InterPro"/>
</dbReference>
<dbReference type="GO" id="GO:0008033">
    <property type="term" value="P:tRNA processing"/>
    <property type="evidence" value="ECO:0007669"/>
    <property type="project" value="UniProtKB-KW"/>
</dbReference>
<dbReference type="FunFam" id="2.30.30.100:FF:000037">
    <property type="entry name" value="U6 snRNA-associated Sm-like protein LSm6"/>
    <property type="match status" value="1"/>
</dbReference>
<dbReference type="Gene3D" id="2.30.30.100">
    <property type="match status" value="1"/>
</dbReference>
<dbReference type="InterPro" id="IPR016487">
    <property type="entry name" value="Lsm6/sSmF"/>
</dbReference>
<dbReference type="InterPro" id="IPR010920">
    <property type="entry name" value="LSM_dom_sf"/>
</dbReference>
<dbReference type="InterPro" id="IPR047575">
    <property type="entry name" value="Sm"/>
</dbReference>
<dbReference type="InterPro" id="IPR001163">
    <property type="entry name" value="Sm_dom_euk/arc"/>
</dbReference>
<dbReference type="PANTHER" id="PTHR11021">
    <property type="entry name" value="SMALL NUCLEAR RIBONUCLEOPROTEIN F SNRNP-F"/>
    <property type="match status" value="1"/>
</dbReference>
<dbReference type="PANTHER" id="PTHR11021:SF1">
    <property type="entry name" value="U6 SNRNA-ASSOCIATED SM-LIKE PROTEIN LSM6"/>
    <property type="match status" value="1"/>
</dbReference>
<dbReference type="Pfam" id="PF01423">
    <property type="entry name" value="LSM"/>
    <property type="match status" value="1"/>
</dbReference>
<dbReference type="SMART" id="SM00651">
    <property type="entry name" value="Sm"/>
    <property type="match status" value="1"/>
</dbReference>
<dbReference type="SUPFAM" id="SSF50182">
    <property type="entry name" value="Sm-like ribonucleoproteins"/>
    <property type="match status" value="1"/>
</dbReference>
<dbReference type="PROSITE" id="PS52002">
    <property type="entry name" value="SM"/>
    <property type="match status" value="1"/>
</dbReference>